<protein>
    <recommendedName>
        <fullName>Uncharacterized protein YGL081W</fullName>
    </recommendedName>
</protein>
<feature type="chain" id="PRO_0000202758" description="Uncharacterized protein YGL081W">
    <location>
        <begin position="1"/>
        <end position="320"/>
    </location>
</feature>
<feature type="domain" description="FHA" evidence="1">
    <location>
        <begin position="22"/>
        <end position="86"/>
    </location>
</feature>
<feature type="region of interest" description="Disordered" evidence="2">
    <location>
        <begin position="242"/>
        <end position="264"/>
    </location>
</feature>
<dbReference type="EMBL" id="Z72603">
    <property type="protein sequence ID" value="CAA96786.1"/>
    <property type="molecule type" value="Genomic_DNA"/>
</dbReference>
<dbReference type="EMBL" id="AY558495">
    <property type="protein sequence ID" value="AAS56821.1"/>
    <property type="molecule type" value="Genomic_DNA"/>
</dbReference>
<dbReference type="EMBL" id="BK006941">
    <property type="protein sequence ID" value="DAA08024.1"/>
    <property type="molecule type" value="Genomic_DNA"/>
</dbReference>
<dbReference type="PIR" id="S64088">
    <property type="entry name" value="S64088"/>
</dbReference>
<dbReference type="RefSeq" id="NP_011434.1">
    <property type="nucleotide sequence ID" value="NM_001180946.1"/>
</dbReference>
<dbReference type="BioGRID" id="33169">
    <property type="interactions" value="160"/>
</dbReference>
<dbReference type="DIP" id="DIP-6409N"/>
<dbReference type="FunCoup" id="P53156">
    <property type="interactions" value="106"/>
</dbReference>
<dbReference type="IntAct" id="P53156">
    <property type="interactions" value="27"/>
</dbReference>
<dbReference type="MINT" id="P53156"/>
<dbReference type="STRING" id="4932.YGL081W"/>
<dbReference type="PaxDb" id="4932-YGL081W"/>
<dbReference type="PeptideAtlas" id="P53156"/>
<dbReference type="EnsemblFungi" id="YGL081W_mRNA">
    <property type="protein sequence ID" value="YGL081W"/>
    <property type="gene ID" value="YGL081W"/>
</dbReference>
<dbReference type="GeneID" id="852799"/>
<dbReference type="KEGG" id="sce:YGL081W"/>
<dbReference type="AGR" id="SGD:S000003049"/>
<dbReference type="SGD" id="S000003049">
    <property type="gene designation" value="YGL081W"/>
</dbReference>
<dbReference type="VEuPathDB" id="FungiDB:YGL081W"/>
<dbReference type="eggNOG" id="ENOG502S4UY">
    <property type="taxonomic scope" value="Eukaryota"/>
</dbReference>
<dbReference type="HOGENOM" id="CLU_869200_0_0_1"/>
<dbReference type="InParanoid" id="P53156"/>
<dbReference type="OMA" id="ADECHET"/>
<dbReference type="OrthoDB" id="4068945at2759"/>
<dbReference type="BioCyc" id="YEAST:G3O-30582-MONOMER"/>
<dbReference type="BioGRID-ORCS" id="852799">
    <property type="hits" value="0 hits in 10 CRISPR screens"/>
</dbReference>
<dbReference type="PRO" id="PR:P53156"/>
<dbReference type="Proteomes" id="UP000002311">
    <property type="component" value="Chromosome VII"/>
</dbReference>
<dbReference type="RNAct" id="P53156">
    <property type="molecule type" value="protein"/>
</dbReference>
<dbReference type="Gene3D" id="2.60.200.20">
    <property type="match status" value="1"/>
</dbReference>
<dbReference type="InterPro" id="IPR000253">
    <property type="entry name" value="FHA_dom"/>
</dbReference>
<dbReference type="InterPro" id="IPR008984">
    <property type="entry name" value="SMAD_FHA_dom_sf"/>
</dbReference>
<dbReference type="Pfam" id="PF00498">
    <property type="entry name" value="FHA"/>
    <property type="match status" value="1"/>
</dbReference>
<dbReference type="SUPFAM" id="SSF49879">
    <property type="entry name" value="SMAD/FHA domain"/>
    <property type="match status" value="1"/>
</dbReference>
<dbReference type="PROSITE" id="PS50006">
    <property type="entry name" value="FHA_DOMAIN"/>
    <property type="match status" value="1"/>
</dbReference>
<name>YGI1_YEAST</name>
<sequence>MGDIRTFVFAIEDTETTQGLCKTIGRSSSFDQNSLCKPYNLYFDEPELSRQHAVLCIKTPIPKIEGVPSIEQLRICIRDLNNKTGTVNLVSDGPNDEIDLKNGDAFGLIAIDNHPFRDNHHLAAKLIFRIELEYFDEAREIVKCTITNVTFGKNNTVSSFPIHSATSTEDSDSSWYGLSEASTQTEVADECHETNTILTRGGRFSILSLRKRGSKQDQKICSNFDRKIHETSSFEEEIEVCTDTDTTEEKEEEEEKEEGDDEEGEIELEIIRVKRIKGRTKIKKTLTCFSKNKKIITPQHSNSMWLLLIVILIFDRLLSN</sequence>
<accession>P53156</accession>
<accession>D6VU63</accession>
<gene>
    <name type="ordered locus">YGL081W</name>
</gene>
<reference key="1">
    <citation type="journal article" date="1997" name="Yeast">
        <title>Sequence analysis of 203 kilobases from Saccharomyces cerevisiae chromosome VII.</title>
        <authorList>
            <person name="Rieger M."/>
            <person name="Brueckner M."/>
            <person name="Schaefer M."/>
            <person name="Mueller-Auer S."/>
        </authorList>
    </citation>
    <scope>NUCLEOTIDE SEQUENCE [GENOMIC DNA]</scope>
    <source>
        <strain>ATCC 204508 / S288c</strain>
    </source>
</reference>
<reference key="2">
    <citation type="journal article" date="1997" name="Nature">
        <title>The nucleotide sequence of Saccharomyces cerevisiae chromosome VII.</title>
        <authorList>
            <person name="Tettelin H."/>
            <person name="Agostoni-Carbone M.L."/>
            <person name="Albermann K."/>
            <person name="Albers M."/>
            <person name="Arroyo J."/>
            <person name="Backes U."/>
            <person name="Barreiros T."/>
            <person name="Bertani I."/>
            <person name="Bjourson A.J."/>
            <person name="Brueckner M."/>
            <person name="Bruschi C.V."/>
            <person name="Carignani G."/>
            <person name="Castagnoli L."/>
            <person name="Cerdan E."/>
            <person name="Clemente M.L."/>
            <person name="Coblenz A."/>
            <person name="Coglievina M."/>
            <person name="Coissac E."/>
            <person name="Defoor E."/>
            <person name="Del Bino S."/>
            <person name="Delius H."/>
            <person name="Delneri D."/>
            <person name="de Wergifosse P."/>
            <person name="Dujon B."/>
            <person name="Durand P."/>
            <person name="Entian K.-D."/>
            <person name="Eraso P."/>
            <person name="Escribano V."/>
            <person name="Fabiani L."/>
            <person name="Fartmann B."/>
            <person name="Feroli F."/>
            <person name="Feuermann M."/>
            <person name="Frontali L."/>
            <person name="Garcia-Gonzalez M."/>
            <person name="Garcia-Saez M.I."/>
            <person name="Goffeau A."/>
            <person name="Guerreiro P."/>
            <person name="Hani J."/>
            <person name="Hansen M."/>
            <person name="Hebling U."/>
            <person name="Hernandez K."/>
            <person name="Heumann K."/>
            <person name="Hilger F."/>
            <person name="Hofmann B."/>
            <person name="Indge K.J."/>
            <person name="James C.M."/>
            <person name="Klima R."/>
            <person name="Koetter P."/>
            <person name="Kramer B."/>
            <person name="Kramer W."/>
            <person name="Lauquin G."/>
            <person name="Leuther H."/>
            <person name="Louis E.J."/>
            <person name="Maillier E."/>
            <person name="Marconi A."/>
            <person name="Martegani E."/>
            <person name="Mazon M.J."/>
            <person name="Mazzoni C."/>
            <person name="McReynolds A.D.K."/>
            <person name="Melchioretto P."/>
            <person name="Mewes H.-W."/>
            <person name="Minenkova O."/>
            <person name="Mueller-Auer S."/>
            <person name="Nawrocki A."/>
            <person name="Netter P."/>
            <person name="Neu R."/>
            <person name="Nombela C."/>
            <person name="Oliver S.G."/>
            <person name="Panzeri L."/>
            <person name="Paoluzi S."/>
            <person name="Plevani P."/>
            <person name="Portetelle D."/>
            <person name="Portillo F."/>
            <person name="Potier S."/>
            <person name="Purnelle B."/>
            <person name="Rieger M."/>
            <person name="Riles L."/>
            <person name="Rinaldi T."/>
            <person name="Robben J."/>
            <person name="Rodrigues-Pousada C."/>
            <person name="Rodriguez-Belmonte E."/>
            <person name="Rodriguez-Torres A.M."/>
            <person name="Rose M."/>
            <person name="Ruzzi M."/>
            <person name="Saliola M."/>
            <person name="Sanchez-Perez M."/>
            <person name="Schaefer B."/>
            <person name="Schaefer M."/>
            <person name="Scharfe M."/>
            <person name="Schmidheini T."/>
            <person name="Schreer A."/>
            <person name="Skala J."/>
            <person name="Souciet J.-L."/>
            <person name="Steensma H.Y."/>
            <person name="Talla E."/>
            <person name="Thierry A."/>
            <person name="Vandenbol M."/>
            <person name="van der Aart Q.J.M."/>
            <person name="Van Dyck L."/>
            <person name="Vanoni M."/>
            <person name="Verhasselt P."/>
            <person name="Voet M."/>
            <person name="Volckaert G."/>
            <person name="Wambutt R."/>
            <person name="Watson M.D."/>
            <person name="Weber N."/>
            <person name="Wedler E."/>
            <person name="Wedler H."/>
            <person name="Wipfli P."/>
            <person name="Wolf K."/>
            <person name="Wright L.F."/>
            <person name="Zaccaria P."/>
            <person name="Zimmermann M."/>
            <person name="Zollner A."/>
            <person name="Kleine K."/>
        </authorList>
    </citation>
    <scope>NUCLEOTIDE SEQUENCE [LARGE SCALE GENOMIC DNA]</scope>
    <source>
        <strain>ATCC 204508 / S288c</strain>
    </source>
</reference>
<reference key="3">
    <citation type="journal article" date="2014" name="G3 (Bethesda)">
        <title>The reference genome sequence of Saccharomyces cerevisiae: Then and now.</title>
        <authorList>
            <person name="Engel S.R."/>
            <person name="Dietrich F.S."/>
            <person name="Fisk D.G."/>
            <person name="Binkley G."/>
            <person name="Balakrishnan R."/>
            <person name="Costanzo M.C."/>
            <person name="Dwight S.S."/>
            <person name="Hitz B.C."/>
            <person name="Karra K."/>
            <person name="Nash R.S."/>
            <person name="Weng S."/>
            <person name="Wong E.D."/>
            <person name="Lloyd P."/>
            <person name="Skrzypek M.S."/>
            <person name="Miyasato S.R."/>
            <person name="Simison M."/>
            <person name="Cherry J.M."/>
        </authorList>
    </citation>
    <scope>GENOME REANNOTATION</scope>
    <source>
        <strain>ATCC 204508 / S288c</strain>
    </source>
</reference>
<reference key="4">
    <citation type="journal article" date="2007" name="Genome Res.">
        <title>Approaching a complete repository of sequence-verified protein-encoding clones for Saccharomyces cerevisiae.</title>
        <authorList>
            <person name="Hu Y."/>
            <person name="Rolfs A."/>
            <person name="Bhullar B."/>
            <person name="Murthy T.V.S."/>
            <person name="Zhu C."/>
            <person name="Berger M.F."/>
            <person name="Camargo A.A."/>
            <person name="Kelley F."/>
            <person name="McCarron S."/>
            <person name="Jepson D."/>
            <person name="Richardson A."/>
            <person name="Raphael J."/>
            <person name="Moreira D."/>
            <person name="Taycher E."/>
            <person name="Zuo D."/>
            <person name="Mohr S."/>
            <person name="Kane M.F."/>
            <person name="Williamson J."/>
            <person name="Simpson A.J.G."/>
            <person name="Bulyk M.L."/>
            <person name="Harlow E."/>
            <person name="Marsischky G."/>
            <person name="Kolodner R.D."/>
            <person name="LaBaer J."/>
        </authorList>
    </citation>
    <scope>NUCLEOTIDE SEQUENCE [GENOMIC DNA]</scope>
    <source>
        <strain>ATCC 204508 / S288c</strain>
    </source>
</reference>
<keyword id="KW-1185">Reference proteome</keyword>
<evidence type="ECO:0000255" key="1">
    <source>
        <dbReference type="PROSITE-ProRule" id="PRU00086"/>
    </source>
</evidence>
<evidence type="ECO:0000256" key="2">
    <source>
        <dbReference type="SAM" id="MobiDB-lite"/>
    </source>
</evidence>
<proteinExistence type="predicted"/>
<organism>
    <name type="scientific">Saccharomyces cerevisiae (strain ATCC 204508 / S288c)</name>
    <name type="common">Baker's yeast</name>
    <dbReference type="NCBI Taxonomy" id="559292"/>
    <lineage>
        <taxon>Eukaryota</taxon>
        <taxon>Fungi</taxon>
        <taxon>Dikarya</taxon>
        <taxon>Ascomycota</taxon>
        <taxon>Saccharomycotina</taxon>
        <taxon>Saccharomycetes</taxon>
        <taxon>Saccharomycetales</taxon>
        <taxon>Saccharomycetaceae</taxon>
        <taxon>Saccharomyces</taxon>
    </lineage>
</organism>